<reference key="1">
    <citation type="journal article" date="2004" name="Nucleic Acids Res.">
        <title>Thermoadaptation trait revealed by the genome sequence of thermophilic Geobacillus kaustophilus.</title>
        <authorList>
            <person name="Takami H."/>
            <person name="Takaki Y."/>
            <person name="Chee G.-J."/>
            <person name="Nishi S."/>
            <person name="Shimamura S."/>
            <person name="Suzuki H."/>
            <person name="Matsui S."/>
            <person name="Uchiyama I."/>
        </authorList>
    </citation>
    <scope>NUCLEOTIDE SEQUENCE [LARGE SCALE GENOMIC DNA]</scope>
    <source>
        <strain>HTA426</strain>
    </source>
</reference>
<organism>
    <name type="scientific">Geobacillus kaustophilus (strain HTA426)</name>
    <dbReference type="NCBI Taxonomy" id="235909"/>
    <lineage>
        <taxon>Bacteria</taxon>
        <taxon>Bacillati</taxon>
        <taxon>Bacillota</taxon>
        <taxon>Bacilli</taxon>
        <taxon>Bacillales</taxon>
        <taxon>Anoxybacillaceae</taxon>
        <taxon>Geobacillus</taxon>
        <taxon>Geobacillus thermoleovorans group</taxon>
    </lineage>
</organism>
<name>ENO_GEOKA</name>
<feature type="chain" id="PRO_0000133890" description="Enolase">
    <location>
        <begin position="1"/>
        <end position="430"/>
    </location>
</feature>
<feature type="active site" description="Proton donor" evidence="1">
    <location>
        <position position="205"/>
    </location>
</feature>
<feature type="active site" description="Proton acceptor" evidence="1">
    <location>
        <position position="339"/>
    </location>
</feature>
<feature type="binding site" evidence="1">
    <location>
        <position position="163"/>
    </location>
    <ligand>
        <name>(2R)-2-phosphoglycerate</name>
        <dbReference type="ChEBI" id="CHEBI:58289"/>
    </ligand>
</feature>
<feature type="binding site" evidence="1">
    <location>
        <position position="242"/>
    </location>
    <ligand>
        <name>Mg(2+)</name>
        <dbReference type="ChEBI" id="CHEBI:18420"/>
    </ligand>
</feature>
<feature type="binding site" evidence="1">
    <location>
        <position position="287"/>
    </location>
    <ligand>
        <name>Mg(2+)</name>
        <dbReference type="ChEBI" id="CHEBI:18420"/>
    </ligand>
</feature>
<feature type="binding site" evidence="1">
    <location>
        <position position="314"/>
    </location>
    <ligand>
        <name>Mg(2+)</name>
        <dbReference type="ChEBI" id="CHEBI:18420"/>
    </ligand>
</feature>
<feature type="binding site" evidence="1">
    <location>
        <position position="339"/>
    </location>
    <ligand>
        <name>(2R)-2-phosphoglycerate</name>
        <dbReference type="ChEBI" id="CHEBI:58289"/>
    </ligand>
</feature>
<feature type="binding site" evidence="1">
    <location>
        <position position="368"/>
    </location>
    <ligand>
        <name>(2R)-2-phosphoglycerate</name>
        <dbReference type="ChEBI" id="CHEBI:58289"/>
    </ligand>
</feature>
<feature type="binding site" evidence="1">
    <location>
        <position position="369"/>
    </location>
    <ligand>
        <name>(2R)-2-phosphoglycerate</name>
        <dbReference type="ChEBI" id="CHEBI:58289"/>
    </ligand>
</feature>
<feature type="binding site" evidence="1">
    <location>
        <position position="390"/>
    </location>
    <ligand>
        <name>(2R)-2-phosphoglycerate</name>
        <dbReference type="ChEBI" id="CHEBI:58289"/>
    </ligand>
</feature>
<accession>Q5KVE7</accession>
<dbReference type="EC" id="4.2.1.11" evidence="1"/>
<dbReference type="EMBL" id="BA000043">
    <property type="protein sequence ID" value="BAD77339.1"/>
    <property type="molecule type" value="Genomic_DNA"/>
</dbReference>
<dbReference type="RefSeq" id="WP_011232524.1">
    <property type="nucleotide sequence ID" value="NC_006510.1"/>
</dbReference>
<dbReference type="SMR" id="Q5KVE7"/>
<dbReference type="STRING" id="235909.GK3054"/>
<dbReference type="GeneID" id="32064926"/>
<dbReference type="KEGG" id="gka:GK3054"/>
<dbReference type="eggNOG" id="COG0148">
    <property type="taxonomic scope" value="Bacteria"/>
</dbReference>
<dbReference type="HOGENOM" id="CLU_031223_2_1_9"/>
<dbReference type="BRENDA" id="4.2.1.11">
    <property type="organism ID" value="8138"/>
</dbReference>
<dbReference type="UniPathway" id="UPA00109">
    <property type="reaction ID" value="UER00187"/>
</dbReference>
<dbReference type="Proteomes" id="UP000001172">
    <property type="component" value="Chromosome"/>
</dbReference>
<dbReference type="GO" id="GO:0009986">
    <property type="term" value="C:cell surface"/>
    <property type="evidence" value="ECO:0007669"/>
    <property type="project" value="UniProtKB-SubCell"/>
</dbReference>
<dbReference type="GO" id="GO:0005576">
    <property type="term" value="C:extracellular region"/>
    <property type="evidence" value="ECO:0007669"/>
    <property type="project" value="UniProtKB-SubCell"/>
</dbReference>
<dbReference type="GO" id="GO:0000015">
    <property type="term" value="C:phosphopyruvate hydratase complex"/>
    <property type="evidence" value="ECO:0007669"/>
    <property type="project" value="InterPro"/>
</dbReference>
<dbReference type="GO" id="GO:0000287">
    <property type="term" value="F:magnesium ion binding"/>
    <property type="evidence" value="ECO:0007669"/>
    <property type="project" value="UniProtKB-UniRule"/>
</dbReference>
<dbReference type="GO" id="GO:0004634">
    <property type="term" value="F:phosphopyruvate hydratase activity"/>
    <property type="evidence" value="ECO:0007669"/>
    <property type="project" value="UniProtKB-UniRule"/>
</dbReference>
<dbReference type="GO" id="GO:0006096">
    <property type="term" value="P:glycolytic process"/>
    <property type="evidence" value="ECO:0007669"/>
    <property type="project" value="UniProtKB-UniRule"/>
</dbReference>
<dbReference type="CDD" id="cd03313">
    <property type="entry name" value="enolase"/>
    <property type="match status" value="1"/>
</dbReference>
<dbReference type="FunFam" id="3.20.20.120:FF:000001">
    <property type="entry name" value="Enolase"/>
    <property type="match status" value="1"/>
</dbReference>
<dbReference type="FunFam" id="3.30.390.10:FF:000001">
    <property type="entry name" value="Enolase"/>
    <property type="match status" value="1"/>
</dbReference>
<dbReference type="Gene3D" id="3.20.20.120">
    <property type="entry name" value="Enolase-like C-terminal domain"/>
    <property type="match status" value="1"/>
</dbReference>
<dbReference type="Gene3D" id="3.30.390.10">
    <property type="entry name" value="Enolase-like, N-terminal domain"/>
    <property type="match status" value="1"/>
</dbReference>
<dbReference type="HAMAP" id="MF_00318">
    <property type="entry name" value="Enolase"/>
    <property type="match status" value="1"/>
</dbReference>
<dbReference type="InterPro" id="IPR000941">
    <property type="entry name" value="Enolase"/>
</dbReference>
<dbReference type="InterPro" id="IPR036849">
    <property type="entry name" value="Enolase-like_C_sf"/>
</dbReference>
<dbReference type="InterPro" id="IPR029017">
    <property type="entry name" value="Enolase-like_N"/>
</dbReference>
<dbReference type="InterPro" id="IPR020810">
    <property type="entry name" value="Enolase_C"/>
</dbReference>
<dbReference type="InterPro" id="IPR020809">
    <property type="entry name" value="Enolase_CS"/>
</dbReference>
<dbReference type="InterPro" id="IPR020811">
    <property type="entry name" value="Enolase_N"/>
</dbReference>
<dbReference type="NCBIfam" id="TIGR01060">
    <property type="entry name" value="eno"/>
    <property type="match status" value="1"/>
</dbReference>
<dbReference type="PANTHER" id="PTHR11902">
    <property type="entry name" value="ENOLASE"/>
    <property type="match status" value="1"/>
</dbReference>
<dbReference type="PANTHER" id="PTHR11902:SF1">
    <property type="entry name" value="ENOLASE"/>
    <property type="match status" value="1"/>
</dbReference>
<dbReference type="Pfam" id="PF00113">
    <property type="entry name" value="Enolase_C"/>
    <property type="match status" value="1"/>
</dbReference>
<dbReference type="Pfam" id="PF03952">
    <property type="entry name" value="Enolase_N"/>
    <property type="match status" value="1"/>
</dbReference>
<dbReference type="PIRSF" id="PIRSF001400">
    <property type="entry name" value="Enolase"/>
    <property type="match status" value="1"/>
</dbReference>
<dbReference type="PRINTS" id="PR00148">
    <property type="entry name" value="ENOLASE"/>
</dbReference>
<dbReference type="SFLD" id="SFLDS00001">
    <property type="entry name" value="Enolase"/>
    <property type="match status" value="1"/>
</dbReference>
<dbReference type="SFLD" id="SFLDF00002">
    <property type="entry name" value="enolase"/>
    <property type="match status" value="1"/>
</dbReference>
<dbReference type="SMART" id="SM01192">
    <property type="entry name" value="Enolase_C"/>
    <property type="match status" value="1"/>
</dbReference>
<dbReference type="SMART" id="SM01193">
    <property type="entry name" value="Enolase_N"/>
    <property type="match status" value="1"/>
</dbReference>
<dbReference type="SUPFAM" id="SSF51604">
    <property type="entry name" value="Enolase C-terminal domain-like"/>
    <property type="match status" value="1"/>
</dbReference>
<dbReference type="SUPFAM" id="SSF54826">
    <property type="entry name" value="Enolase N-terminal domain-like"/>
    <property type="match status" value="1"/>
</dbReference>
<dbReference type="PROSITE" id="PS00164">
    <property type="entry name" value="ENOLASE"/>
    <property type="match status" value="1"/>
</dbReference>
<gene>
    <name evidence="1" type="primary">eno</name>
    <name type="ordered locus">GK3054</name>
</gene>
<protein>
    <recommendedName>
        <fullName evidence="1">Enolase</fullName>
        <ecNumber evidence="1">4.2.1.11</ecNumber>
    </recommendedName>
    <alternativeName>
        <fullName evidence="1">2-phospho-D-glycerate hydro-lyase</fullName>
    </alternativeName>
    <alternativeName>
        <fullName evidence="1">2-phosphoglycerate dehydratase</fullName>
    </alternativeName>
</protein>
<evidence type="ECO:0000255" key="1">
    <source>
        <dbReference type="HAMAP-Rule" id="MF_00318"/>
    </source>
</evidence>
<keyword id="KW-0963">Cytoplasm</keyword>
<keyword id="KW-0324">Glycolysis</keyword>
<keyword id="KW-0456">Lyase</keyword>
<keyword id="KW-0460">Magnesium</keyword>
<keyword id="KW-0479">Metal-binding</keyword>
<keyword id="KW-1185">Reference proteome</keyword>
<keyword id="KW-0964">Secreted</keyword>
<sequence length="430" mass="46604">MSAIIDVYAREVLDSRGNPTVEVEVYTEDGGFGRALVPSGASTGEYEAVELRDGDKNRYLGKGVLKAVENVNEIIAPEIIGLEVADQVAIDRKLIELDGTENKSKLGANAILGVSLAVARAAADELGLPLYQYLGGFNAKTLPVPMMNILNGGAHADNNVDIQEFMIMPVGAESFREALRMGAEIFHSLKAVLKAKGYNTAVGDEGGFAPNLKSNEEALQTIIEAIEKAGYKPGEQVMLAMDVASSELYNKEDGKYHLEGEGVVKTSEEMVAWYEELVSKYPIISIEDGLDENDWEGHKLLTERLGKKVQLVGDDLFVTNTKKLAEGIEKGVGNSILIKVNQIGTLTETFDAIEMAKRAGYTAVVSHRSGETEDSTIADIAVATNAGQIKTGAPSRTDRVAKYNQLLRIEDELGHTAIYQGIRSFYNLKK</sequence>
<comment type="function">
    <text evidence="1">Catalyzes the reversible conversion of 2-phosphoglycerate (2-PG) into phosphoenolpyruvate (PEP). It is essential for the degradation of carbohydrates via glycolysis.</text>
</comment>
<comment type="catalytic activity">
    <reaction evidence="1">
        <text>(2R)-2-phosphoglycerate = phosphoenolpyruvate + H2O</text>
        <dbReference type="Rhea" id="RHEA:10164"/>
        <dbReference type="ChEBI" id="CHEBI:15377"/>
        <dbReference type="ChEBI" id="CHEBI:58289"/>
        <dbReference type="ChEBI" id="CHEBI:58702"/>
        <dbReference type="EC" id="4.2.1.11"/>
    </reaction>
</comment>
<comment type="cofactor">
    <cofactor evidence="1">
        <name>Mg(2+)</name>
        <dbReference type="ChEBI" id="CHEBI:18420"/>
    </cofactor>
    <text evidence="1">Binds a second Mg(2+) ion via substrate during catalysis.</text>
</comment>
<comment type="pathway">
    <text evidence="1">Carbohydrate degradation; glycolysis; pyruvate from D-glyceraldehyde 3-phosphate: step 4/5.</text>
</comment>
<comment type="subcellular location">
    <subcellularLocation>
        <location evidence="1">Cytoplasm</location>
    </subcellularLocation>
    <subcellularLocation>
        <location evidence="1">Secreted</location>
    </subcellularLocation>
    <subcellularLocation>
        <location evidence="1">Cell surface</location>
    </subcellularLocation>
    <text evidence="1">Fractions of enolase are present in both the cytoplasm and on the cell surface.</text>
</comment>
<comment type="similarity">
    <text evidence="1">Belongs to the enolase family.</text>
</comment>
<proteinExistence type="inferred from homology"/>